<reference key="1">
    <citation type="journal article" date="1995" name="Science">
        <title>Whole-genome random sequencing and assembly of Haemophilus influenzae Rd.</title>
        <authorList>
            <person name="Fleischmann R.D."/>
            <person name="Adams M.D."/>
            <person name="White O."/>
            <person name="Clayton R.A."/>
            <person name="Kirkness E.F."/>
            <person name="Kerlavage A.R."/>
            <person name="Bult C.J."/>
            <person name="Tomb J.-F."/>
            <person name="Dougherty B.A."/>
            <person name="Merrick J.M."/>
            <person name="McKenney K."/>
            <person name="Sutton G.G."/>
            <person name="FitzHugh W."/>
            <person name="Fields C.A."/>
            <person name="Gocayne J.D."/>
            <person name="Scott J.D."/>
            <person name="Shirley R."/>
            <person name="Liu L.-I."/>
            <person name="Glodek A."/>
            <person name="Kelley J.M."/>
            <person name="Weidman J.F."/>
            <person name="Phillips C.A."/>
            <person name="Spriggs T."/>
            <person name="Hedblom E."/>
            <person name="Cotton M.D."/>
            <person name="Utterback T.R."/>
            <person name="Hanna M.C."/>
            <person name="Nguyen D.T."/>
            <person name="Saudek D.M."/>
            <person name="Brandon R.C."/>
            <person name="Fine L.D."/>
            <person name="Fritchman J.L."/>
            <person name="Fuhrmann J.L."/>
            <person name="Geoghagen N.S.M."/>
            <person name="Gnehm C.L."/>
            <person name="McDonald L.A."/>
            <person name="Small K.V."/>
            <person name="Fraser C.M."/>
            <person name="Smith H.O."/>
            <person name="Venter J.C."/>
        </authorList>
    </citation>
    <scope>NUCLEOTIDE SEQUENCE [LARGE SCALE GENOMIC DNA]</scope>
    <source>
        <strain>ATCC 51907 / DSM 11121 / KW20 / Rd</strain>
    </source>
</reference>
<feature type="chain" id="PRO_0000053822" description="Uncharacterized acyl-CoA thioester hydrolase HI_0827">
    <location>
        <begin position="1"/>
        <end position="154"/>
    </location>
</feature>
<feature type="domain" description="HotDog ACOT-type" evidence="1">
    <location>
        <begin position="13"/>
        <end position="128"/>
    </location>
</feature>
<feature type="strand" evidence="3">
    <location>
        <begin position="15"/>
        <end position="22"/>
    </location>
</feature>
<feature type="helix" evidence="3">
    <location>
        <begin position="25"/>
        <end position="27"/>
    </location>
</feature>
<feature type="strand" evidence="3">
    <location>
        <begin position="32"/>
        <end position="34"/>
    </location>
</feature>
<feature type="helix" evidence="3">
    <location>
        <begin position="36"/>
        <end position="55"/>
    </location>
</feature>
<feature type="strand" evidence="3">
    <location>
        <begin position="59"/>
        <end position="69"/>
    </location>
</feature>
<feature type="strand" evidence="3">
    <location>
        <begin position="78"/>
        <end position="88"/>
    </location>
</feature>
<feature type="strand" evidence="3">
    <location>
        <begin position="90"/>
        <end position="102"/>
    </location>
</feature>
<feature type="strand" evidence="3">
    <location>
        <begin position="104"/>
        <end position="108"/>
    </location>
</feature>
<feature type="strand" evidence="3">
    <location>
        <begin position="112"/>
        <end position="125"/>
    </location>
</feature>
<feature type="helix" evidence="3">
    <location>
        <begin position="140"/>
        <end position="149"/>
    </location>
</feature>
<gene>
    <name type="ordered locus">HI_0827</name>
</gene>
<dbReference type="EC" id="3.1.2.-"/>
<dbReference type="EMBL" id="L42023">
    <property type="protein sequence ID" value="AAC22485.1"/>
    <property type="molecule type" value="Genomic_DNA"/>
</dbReference>
<dbReference type="PIR" id="A64097">
    <property type="entry name" value="A64097"/>
</dbReference>
<dbReference type="RefSeq" id="NP_438987.1">
    <property type="nucleotide sequence ID" value="NC_000907.1"/>
</dbReference>
<dbReference type="PDB" id="1YLI">
    <property type="method" value="X-ray"/>
    <property type="resolution" value="1.95 A"/>
    <property type="chains" value="A/B=2-154"/>
</dbReference>
<dbReference type="PDB" id="3BJK">
    <property type="method" value="X-ray"/>
    <property type="resolution" value="1.90 A"/>
    <property type="chains" value="A/B/C/D/E/F=2-154"/>
</dbReference>
<dbReference type="PDBsum" id="1YLI"/>
<dbReference type="PDBsum" id="3BJK"/>
<dbReference type="SMR" id="P44886"/>
<dbReference type="STRING" id="71421.HI_0827"/>
<dbReference type="DrugBank" id="DB01992">
    <property type="generic name" value="Coenzyme A"/>
</dbReference>
<dbReference type="EnsemblBacteria" id="AAC22485">
    <property type="protein sequence ID" value="AAC22485"/>
    <property type="gene ID" value="HI_0827"/>
</dbReference>
<dbReference type="KEGG" id="hin:HI_0827"/>
<dbReference type="PATRIC" id="fig|71421.8.peg.868"/>
<dbReference type="eggNOG" id="COG1607">
    <property type="taxonomic scope" value="Bacteria"/>
</dbReference>
<dbReference type="HOGENOM" id="CLU_050164_2_0_6"/>
<dbReference type="OrthoDB" id="9801856at2"/>
<dbReference type="PhylomeDB" id="P44886"/>
<dbReference type="BioCyc" id="HINF71421:G1GJ1-868-MONOMER"/>
<dbReference type="BRENDA" id="3.1.2.20">
    <property type="organism ID" value="2529"/>
</dbReference>
<dbReference type="EvolutionaryTrace" id="P44886"/>
<dbReference type="Proteomes" id="UP000000579">
    <property type="component" value="Chromosome"/>
</dbReference>
<dbReference type="GO" id="GO:0005737">
    <property type="term" value="C:cytoplasm"/>
    <property type="evidence" value="ECO:0000318"/>
    <property type="project" value="GO_Central"/>
</dbReference>
<dbReference type="GO" id="GO:0005829">
    <property type="term" value="C:cytosol"/>
    <property type="evidence" value="ECO:0000318"/>
    <property type="project" value="GO_Central"/>
</dbReference>
<dbReference type="GO" id="GO:0052816">
    <property type="term" value="F:long-chain fatty acyl-CoA hydrolase activity"/>
    <property type="evidence" value="ECO:0000318"/>
    <property type="project" value="GO_Central"/>
</dbReference>
<dbReference type="GO" id="GO:0006637">
    <property type="term" value="P:acyl-CoA metabolic process"/>
    <property type="evidence" value="ECO:0000318"/>
    <property type="project" value="GO_Central"/>
</dbReference>
<dbReference type="GO" id="GO:0009062">
    <property type="term" value="P:fatty acid catabolic process"/>
    <property type="evidence" value="ECO:0000318"/>
    <property type="project" value="GO_Central"/>
</dbReference>
<dbReference type="CDD" id="cd03442">
    <property type="entry name" value="BFIT_BACH"/>
    <property type="match status" value="1"/>
</dbReference>
<dbReference type="FunFam" id="3.10.129.10:FF:000008">
    <property type="entry name" value="Acyl-CoA thioester hydrolase"/>
    <property type="match status" value="1"/>
</dbReference>
<dbReference type="Gene3D" id="3.10.129.10">
    <property type="entry name" value="Hotdog Thioesterase"/>
    <property type="match status" value="1"/>
</dbReference>
<dbReference type="InterPro" id="IPR040170">
    <property type="entry name" value="Cytosol_ACT"/>
</dbReference>
<dbReference type="InterPro" id="IPR033120">
    <property type="entry name" value="HOTDOG_ACOT"/>
</dbReference>
<dbReference type="InterPro" id="IPR029069">
    <property type="entry name" value="HotDog_dom_sf"/>
</dbReference>
<dbReference type="InterPro" id="IPR006683">
    <property type="entry name" value="Thioestr_dom"/>
</dbReference>
<dbReference type="NCBIfam" id="NF007970">
    <property type="entry name" value="PRK10694.1"/>
    <property type="match status" value="1"/>
</dbReference>
<dbReference type="PANTHER" id="PTHR11049">
    <property type="entry name" value="ACYL COENZYME A THIOESTER HYDROLASE"/>
    <property type="match status" value="1"/>
</dbReference>
<dbReference type="PANTHER" id="PTHR11049:SF5">
    <property type="entry name" value="ACYL-COA THIOESTER HYDROLASE YCIA"/>
    <property type="match status" value="1"/>
</dbReference>
<dbReference type="Pfam" id="PF03061">
    <property type="entry name" value="4HBT"/>
    <property type="match status" value="1"/>
</dbReference>
<dbReference type="SUPFAM" id="SSF54637">
    <property type="entry name" value="Thioesterase/thiol ester dehydrase-isomerase"/>
    <property type="match status" value="1"/>
</dbReference>
<dbReference type="PROSITE" id="PS51770">
    <property type="entry name" value="HOTDOG_ACOT"/>
    <property type="match status" value="1"/>
</dbReference>
<evidence type="ECO:0000255" key="1">
    <source>
        <dbReference type="PROSITE-ProRule" id="PRU01106"/>
    </source>
</evidence>
<evidence type="ECO:0000305" key="2"/>
<evidence type="ECO:0007829" key="3">
    <source>
        <dbReference type="PDB" id="3BJK"/>
    </source>
</evidence>
<organism>
    <name type="scientific">Haemophilus influenzae (strain ATCC 51907 / DSM 11121 / KW20 / Rd)</name>
    <dbReference type="NCBI Taxonomy" id="71421"/>
    <lineage>
        <taxon>Bacteria</taxon>
        <taxon>Pseudomonadati</taxon>
        <taxon>Pseudomonadota</taxon>
        <taxon>Gammaproteobacteria</taxon>
        <taxon>Pasteurellales</taxon>
        <taxon>Pasteurellaceae</taxon>
        <taxon>Haemophilus</taxon>
    </lineage>
</organism>
<comment type="similarity">
    <text evidence="2">Belongs to the acyl coenzyme A hydrolase family.</text>
</comment>
<name>Y827_HAEIN</name>
<accession>P44886</accession>
<keyword id="KW-0002">3D-structure</keyword>
<keyword id="KW-0378">Hydrolase</keyword>
<keyword id="KW-1185">Reference proteome</keyword>
<proteinExistence type="evidence at protein level"/>
<sequence>MSANFTDKNGRQSKGVLLLRTLAMPSDTNANGDIFGGWIMSQMDMGGAILAKEIAHGRVVTVAVESMNFIKPISVGDVVCCYGQCLKVGRSSIKIKVEVWVKKVASEPIGERYCVTDAVFTFVAVDNNGRSRTIPRENNQELEKALALISEQPL</sequence>
<protein>
    <recommendedName>
        <fullName>Uncharacterized acyl-CoA thioester hydrolase HI_0827</fullName>
        <ecNumber>3.1.2.-</ecNumber>
    </recommendedName>
</protein>